<proteinExistence type="inferred from homology"/>
<sequence>MELGKTKSVHIVGVGGAGMSAIAELLLKSGFRVTGSDLSSGEVTEKLAEHGAIIYKGHRAEQVAGSDVVVYSSAIRAEDNIELIAAEKAGIPVIKRDEMLGELMRYTYGICIAGTHGKTTTTAMIATMLIESDESPTVMIGGISDYLKGSTVVGEGKYMVIEADEYDRAFLKLTPTIAVVNSLESEHMDTYGTLDELKEAFVAFANKVPFYGRVICCVDWPEIRKIMPKMNRLCTTFGIDEPADVMAFDIVLDNQHTTFSIKAFGQEYRDVSLQVPGRHNVLNALAAFSTGLELGILPERLIAGLGRYSGMRRRFQVKYDNGHGLMVVDDYAHHPTEVKATVRAAKSGWRDSRIVAVFQPHLFSRTREFAHEYGWALSHADMVYVADIYPAREKGVDYPGVDGELIADAVRKAGGKHVEFVADMQNLFTALKEWSVNGNMLLFMGAGDITHLATRVANFCREGVAVQGNEDSQSGFAAS</sequence>
<comment type="function">
    <text evidence="1">Cell wall formation.</text>
</comment>
<comment type="catalytic activity">
    <reaction evidence="1">
        <text>UDP-N-acetyl-alpha-D-muramate + L-alanine + ATP = UDP-N-acetyl-alpha-D-muramoyl-L-alanine + ADP + phosphate + H(+)</text>
        <dbReference type="Rhea" id="RHEA:23372"/>
        <dbReference type="ChEBI" id="CHEBI:15378"/>
        <dbReference type="ChEBI" id="CHEBI:30616"/>
        <dbReference type="ChEBI" id="CHEBI:43474"/>
        <dbReference type="ChEBI" id="CHEBI:57972"/>
        <dbReference type="ChEBI" id="CHEBI:70757"/>
        <dbReference type="ChEBI" id="CHEBI:83898"/>
        <dbReference type="ChEBI" id="CHEBI:456216"/>
        <dbReference type="EC" id="6.3.2.8"/>
    </reaction>
</comment>
<comment type="pathway">
    <text evidence="1">Cell wall biogenesis; peptidoglycan biosynthesis.</text>
</comment>
<comment type="subcellular location">
    <subcellularLocation>
        <location evidence="1">Cytoplasm</location>
    </subcellularLocation>
</comment>
<comment type="similarity">
    <text evidence="1">Belongs to the MurCDEF family.</text>
</comment>
<protein>
    <recommendedName>
        <fullName evidence="1">UDP-N-acetylmuramate--L-alanine ligase</fullName>
        <ecNumber evidence="1">6.3.2.8</ecNumber>
    </recommendedName>
    <alternativeName>
        <fullName evidence="1">UDP-N-acetylmuramoyl-L-alanine synthetase</fullName>
    </alternativeName>
</protein>
<dbReference type="EC" id="6.3.2.8" evidence="1"/>
<dbReference type="EMBL" id="CP001110">
    <property type="protein sequence ID" value="ACF45036.1"/>
    <property type="molecule type" value="Genomic_DNA"/>
</dbReference>
<dbReference type="RefSeq" id="WP_012509504.1">
    <property type="nucleotide sequence ID" value="NC_011060.1"/>
</dbReference>
<dbReference type="SMR" id="B4SH48"/>
<dbReference type="STRING" id="324925.Ppha_2893"/>
<dbReference type="KEGG" id="pph:Ppha_2893"/>
<dbReference type="eggNOG" id="COG0773">
    <property type="taxonomic scope" value="Bacteria"/>
</dbReference>
<dbReference type="HOGENOM" id="CLU_028104_2_2_10"/>
<dbReference type="OrthoDB" id="9804126at2"/>
<dbReference type="UniPathway" id="UPA00219"/>
<dbReference type="Proteomes" id="UP000002724">
    <property type="component" value="Chromosome"/>
</dbReference>
<dbReference type="GO" id="GO:0005737">
    <property type="term" value="C:cytoplasm"/>
    <property type="evidence" value="ECO:0007669"/>
    <property type="project" value="UniProtKB-SubCell"/>
</dbReference>
<dbReference type="GO" id="GO:0005524">
    <property type="term" value="F:ATP binding"/>
    <property type="evidence" value="ECO:0007669"/>
    <property type="project" value="UniProtKB-UniRule"/>
</dbReference>
<dbReference type="GO" id="GO:0008763">
    <property type="term" value="F:UDP-N-acetylmuramate-L-alanine ligase activity"/>
    <property type="evidence" value="ECO:0007669"/>
    <property type="project" value="UniProtKB-UniRule"/>
</dbReference>
<dbReference type="GO" id="GO:0051301">
    <property type="term" value="P:cell division"/>
    <property type="evidence" value="ECO:0007669"/>
    <property type="project" value="UniProtKB-KW"/>
</dbReference>
<dbReference type="GO" id="GO:0071555">
    <property type="term" value="P:cell wall organization"/>
    <property type="evidence" value="ECO:0007669"/>
    <property type="project" value="UniProtKB-KW"/>
</dbReference>
<dbReference type="GO" id="GO:0009252">
    <property type="term" value="P:peptidoglycan biosynthetic process"/>
    <property type="evidence" value="ECO:0007669"/>
    <property type="project" value="UniProtKB-UniRule"/>
</dbReference>
<dbReference type="GO" id="GO:0008360">
    <property type="term" value="P:regulation of cell shape"/>
    <property type="evidence" value="ECO:0007669"/>
    <property type="project" value="UniProtKB-KW"/>
</dbReference>
<dbReference type="Gene3D" id="3.90.190.20">
    <property type="entry name" value="Mur ligase, C-terminal domain"/>
    <property type="match status" value="1"/>
</dbReference>
<dbReference type="Gene3D" id="3.40.1190.10">
    <property type="entry name" value="Mur-like, catalytic domain"/>
    <property type="match status" value="1"/>
</dbReference>
<dbReference type="Gene3D" id="3.40.50.720">
    <property type="entry name" value="NAD(P)-binding Rossmann-like Domain"/>
    <property type="match status" value="1"/>
</dbReference>
<dbReference type="HAMAP" id="MF_00046">
    <property type="entry name" value="MurC"/>
    <property type="match status" value="1"/>
</dbReference>
<dbReference type="InterPro" id="IPR036565">
    <property type="entry name" value="Mur-like_cat_sf"/>
</dbReference>
<dbReference type="InterPro" id="IPR004101">
    <property type="entry name" value="Mur_ligase_C"/>
</dbReference>
<dbReference type="InterPro" id="IPR036615">
    <property type="entry name" value="Mur_ligase_C_dom_sf"/>
</dbReference>
<dbReference type="InterPro" id="IPR013221">
    <property type="entry name" value="Mur_ligase_cen"/>
</dbReference>
<dbReference type="InterPro" id="IPR000713">
    <property type="entry name" value="Mur_ligase_N"/>
</dbReference>
<dbReference type="InterPro" id="IPR050061">
    <property type="entry name" value="MurCDEF_pg_biosynth"/>
</dbReference>
<dbReference type="InterPro" id="IPR005758">
    <property type="entry name" value="UDP-N-AcMur_Ala_ligase_MurC"/>
</dbReference>
<dbReference type="NCBIfam" id="TIGR01082">
    <property type="entry name" value="murC"/>
    <property type="match status" value="1"/>
</dbReference>
<dbReference type="PANTHER" id="PTHR43445:SF3">
    <property type="entry name" value="UDP-N-ACETYLMURAMATE--L-ALANINE LIGASE"/>
    <property type="match status" value="1"/>
</dbReference>
<dbReference type="PANTHER" id="PTHR43445">
    <property type="entry name" value="UDP-N-ACETYLMURAMATE--L-ALANINE LIGASE-RELATED"/>
    <property type="match status" value="1"/>
</dbReference>
<dbReference type="Pfam" id="PF01225">
    <property type="entry name" value="Mur_ligase"/>
    <property type="match status" value="1"/>
</dbReference>
<dbReference type="Pfam" id="PF02875">
    <property type="entry name" value="Mur_ligase_C"/>
    <property type="match status" value="1"/>
</dbReference>
<dbReference type="Pfam" id="PF08245">
    <property type="entry name" value="Mur_ligase_M"/>
    <property type="match status" value="1"/>
</dbReference>
<dbReference type="SUPFAM" id="SSF51984">
    <property type="entry name" value="MurCD N-terminal domain"/>
    <property type="match status" value="1"/>
</dbReference>
<dbReference type="SUPFAM" id="SSF53623">
    <property type="entry name" value="MurD-like peptide ligases, catalytic domain"/>
    <property type="match status" value="1"/>
</dbReference>
<dbReference type="SUPFAM" id="SSF53244">
    <property type="entry name" value="MurD-like peptide ligases, peptide-binding domain"/>
    <property type="match status" value="1"/>
</dbReference>
<name>MURC_PELPB</name>
<gene>
    <name evidence="1" type="primary">murC</name>
    <name type="ordered locus">Ppha_2893</name>
</gene>
<reference key="1">
    <citation type="submission" date="2008-06" db="EMBL/GenBank/DDBJ databases">
        <title>Complete sequence of Pelodictyon phaeoclathratiforme BU-1.</title>
        <authorList>
            <consortium name="US DOE Joint Genome Institute"/>
            <person name="Lucas S."/>
            <person name="Copeland A."/>
            <person name="Lapidus A."/>
            <person name="Glavina del Rio T."/>
            <person name="Dalin E."/>
            <person name="Tice H."/>
            <person name="Bruce D."/>
            <person name="Goodwin L."/>
            <person name="Pitluck S."/>
            <person name="Schmutz J."/>
            <person name="Larimer F."/>
            <person name="Land M."/>
            <person name="Hauser L."/>
            <person name="Kyrpides N."/>
            <person name="Mikhailova N."/>
            <person name="Liu Z."/>
            <person name="Li T."/>
            <person name="Zhao F."/>
            <person name="Overmann J."/>
            <person name="Bryant D.A."/>
            <person name="Richardson P."/>
        </authorList>
    </citation>
    <scope>NUCLEOTIDE SEQUENCE [LARGE SCALE GENOMIC DNA]</scope>
    <source>
        <strain>DSM 5477 / BU-1</strain>
    </source>
</reference>
<organism>
    <name type="scientific">Pelodictyon phaeoclathratiforme (strain DSM 5477 / BU-1)</name>
    <dbReference type="NCBI Taxonomy" id="324925"/>
    <lineage>
        <taxon>Bacteria</taxon>
        <taxon>Pseudomonadati</taxon>
        <taxon>Chlorobiota</taxon>
        <taxon>Chlorobiia</taxon>
        <taxon>Chlorobiales</taxon>
        <taxon>Chlorobiaceae</taxon>
        <taxon>Chlorobium/Pelodictyon group</taxon>
        <taxon>Pelodictyon</taxon>
    </lineage>
</organism>
<keyword id="KW-0067">ATP-binding</keyword>
<keyword id="KW-0131">Cell cycle</keyword>
<keyword id="KW-0132">Cell division</keyword>
<keyword id="KW-0133">Cell shape</keyword>
<keyword id="KW-0961">Cell wall biogenesis/degradation</keyword>
<keyword id="KW-0963">Cytoplasm</keyword>
<keyword id="KW-0436">Ligase</keyword>
<keyword id="KW-0547">Nucleotide-binding</keyword>
<keyword id="KW-0573">Peptidoglycan synthesis</keyword>
<keyword id="KW-1185">Reference proteome</keyword>
<evidence type="ECO:0000255" key="1">
    <source>
        <dbReference type="HAMAP-Rule" id="MF_00046"/>
    </source>
</evidence>
<accession>B4SH48</accession>
<feature type="chain" id="PRO_1000091120" description="UDP-N-acetylmuramate--L-alanine ligase">
    <location>
        <begin position="1"/>
        <end position="479"/>
    </location>
</feature>
<feature type="binding site" evidence="1">
    <location>
        <begin position="114"/>
        <end position="120"/>
    </location>
    <ligand>
        <name>ATP</name>
        <dbReference type="ChEBI" id="CHEBI:30616"/>
    </ligand>
</feature>